<comment type="function">
    <text evidence="4">A cytochrome P450 monooxygenase involved in the biosynthesis of pentacyclic alkaloids natural products such as alstonine, putative antipsychotic compounds (PubMed:36349266). Catalyzes the conversion of tetrahydroalstonine to alstonine (PubMed:36349266). No oxidative activity towards ajmalicine (PubMed:36349266).</text>
</comment>
<comment type="catalytic activity">
    <reaction evidence="4">
        <text>tetrahydroalstonine + A + reduced [NADPH--hemoprotein reductase] + O2 = alstonine + AH2 + oxidized [NADPH--hemoprotein reductase] + 2 H2O + H(+)</text>
        <dbReference type="Rhea" id="RHEA:58128"/>
        <dbReference type="Rhea" id="RHEA-COMP:11964"/>
        <dbReference type="Rhea" id="RHEA-COMP:11965"/>
        <dbReference type="ChEBI" id="CHEBI:13193"/>
        <dbReference type="ChEBI" id="CHEBI:15377"/>
        <dbReference type="ChEBI" id="CHEBI:15378"/>
        <dbReference type="ChEBI" id="CHEBI:15379"/>
        <dbReference type="ChEBI" id="CHEBI:17499"/>
        <dbReference type="ChEBI" id="CHEBI:57618"/>
        <dbReference type="ChEBI" id="CHEBI:58210"/>
        <dbReference type="ChEBI" id="CHEBI:142526"/>
        <dbReference type="ChEBI" id="CHEBI:142530"/>
    </reaction>
    <physiologicalReaction direction="left-to-right" evidence="4">
        <dbReference type="Rhea" id="RHEA:58129"/>
    </physiologicalReaction>
</comment>
<comment type="cofactor">
    <cofactor evidence="1">
        <name>heme</name>
        <dbReference type="ChEBI" id="CHEBI:30413"/>
    </cofactor>
</comment>
<comment type="pathway">
    <text evidence="4">Alkaloid biosynthesis.</text>
</comment>
<comment type="subcellular location">
    <subcellularLocation>
        <location evidence="2">Membrane</location>
        <topology evidence="2">Single-pass membrane protein</topology>
    </subcellularLocation>
</comment>
<comment type="similarity">
    <text evidence="6">Belongs to the cytochrome P450 family.</text>
</comment>
<keyword id="KW-0017">Alkaloid metabolism</keyword>
<keyword id="KW-0325">Glycoprotein</keyword>
<keyword id="KW-0349">Heme</keyword>
<keyword id="KW-0408">Iron</keyword>
<keyword id="KW-0472">Membrane</keyword>
<keyword id="KW-0479">Metal-binding</keyword>
<keyword id="KW-0503">Monooxygenase</keyword>
<keyword id="KW-0560">Oxidoreductase</keyword>
<keyword id="KW-0812">Transmembrane</keyword>
<keyword id="KW-1133">Transmembrane helix</keyword>
<name>AS_ALSSC</name>
<accession>A0A9E7LUJ4</accession>
<evidence type="ECO:0000250" key="1">
    <source>
        <dbReference type="UniProtKB" id="P04798"/>
    </source>
</evidence>
<evidence type="ECO:0000255" key="2"/>
<evidence type="ECO:0000255" key="3">
    <source>
        <dbReference type="PROSITE-ProRule" id="PRU00498"/>
    </source>
</evidence>
<evidence type="ECO:0000269" key="4">
    <source>
    </source>
</evidence>
<evidence type="ECO:0000303" key="5">
    <source>
    </source>
</evidence>
<evidence type="ECO:0000305" key="6"/>
<evidence type="ECO:0000312" key="7">
    <source>
        <dbReference type="EMBL" id="URS65382.1"/>
    </source>
</evidence>
<organism>
    <name type="scientific">Alstonia scholaris</name>
    <name type="common">Dogbane</name>
    <name type="synonym">Echites scholaris</name>
    <dbReference type="NCBI Taxonomy" id="52822"/>
    <lineage>
        <taxon>Eukaryota</taxon>
        <taxon>Viridiplantae</taxon>
        <taxon>Streptophyta</taxon>
        <taxon>Embryophyta</taxon>
        <taxon>Tracheophyta</taxon>
        <taxon>Spermatophyta</taxon>
        <taxon>Magnoliopsida</taxon>
        <taxon>eudicotyledons</taxon>
        <taxon>Gunneridae</taxon>
        <taxon>Pentapetalae</taxon>
        <taxon>asterids</taxon>
        <taxon>lamiids</taxon>
        <taxon>Gentianales</taxon>
        <taxon>Apocynaceae</taxon>
        <taxon>Rauvolfioideae</taxon>
        <taxon>Alstonieae</taxon>
        <taxon>Alstonia</taxon>
    </lineage>
</organism>
<protein>
    <recommendedName>
        <fullName evidence="5">Alstonine synthase</fullName>
        <shortName evidence="5">AsAS</shortName>
        <ecNumber evidence="4">1.14.19.-</ecNumber>
    </recommendedName>
    <alternativeName>
        <fullName evidence="5">Cytochrome P450 AS</fullName>
    </alternativeName>
</protein>
<dbReference type="EC" id="1.14.19.-" evidence="4"/>
<dbReference type="EMBL" id="OM323327">
    <property type="protein sequence ID" value="URS65382.1"/>
    <property type="molecule type" value="mRNA"/>
</dbReference>
<dbReference type="GO" id="GO:0016020">
    <property type="term" value="C:membrane"/>
    <property type="evidence" value="ECO:0007669"/>
    <property type="project" value="UniProtKB-KW"/>
</dbReference>
<dbReference type="GO" id="GO:0020037">
    <property type="term" value="F:heme binding"/>
    <property type="evidence" value="ECO:0007669"/>
    <property type="project" value="InterPro"/>
</dbReference>
<dbReference type="GO" id="GO:0005506">
    <property type="term" value="F:iron ion binding"/>
    <property type="evidence" value="ECO:0007669"/>
    <property type="project" value="InterPro"/>
</dbReference>
<dbReference type="GO" id="GO:0004497">
    <property type="term" value="F:monooxygenase activity"/>
    <property type="evidence" value="ECO:0000314"/>
    <property type="project" value="UniProtKB"/>
</dbReference>
<dbReference type="GO" id="GO:0016705">
    <property type="term" value="F:oxidoreductase activity, acting on paired donors, with incorporation or reduction of molecular oxygen"/>
    <property type="evidence" value="ECO:0007669"/>
    <property type="project" value="InterPro"/>
</dbReference>
<dbReference type="GO" id="GO:0035835">
    <property type="term" value="P:indole alkaloid biosynthetic process"/>
    <property type="evidence" value="ECO:0000314"/>
    <property type="project" value="UniProtKB"/>
</dbReference>
<dbReference type="CDD" id="cd11072">
    <property type="entry name" value="CYP71-like"/>
    <property type="match status" value="1"/>
</dbReference>
<dbReference type="FunFam" id="1.10.630.10:FF:000043">
    <property type="entry name" value="Cytochrome P450 99A2"/>
    <property type="match status" value="1"/>
</dbReference>
<dbReference type="Gene3D" id="1.10.630.10">
    <property type="entry name" value="Cytochrome P450"/>
    <property type="match status" value="1"/>
</dbReference>
<dbReference type="InterPro" id="IPR052306">
    <property type="entry name" value="CYP450_71D"/>
</dbReference>
<dbReference type="InterPro" id="IPR001128">
    <property type="entry name" value="Cyt_P450"/>
</dbReference>
<dbReference type="InterPro" id="IPR017972">
    <property type="entry name" value="Cyt_P450_CS"/>
</dbReference>
<dbReference type="InterPro" id="IPR002401">
    <property type="entry name" value="Cyt_P450_E_grp-I"/>
</dbReference>
<dbReference type="InterPro" id="IPR036396">
    <property type="entry name" value="Cyt_P450_sf"/>
</dbReference>
<dbReference type="PANTHER" id="PTHR47953:SF5">
    <property type="entry name" value="CYTOCHROME P450 71AV8-LIKE"/>
    <property type="match status" value="1"/>
</dbReference>
<dbReference type="PANTHER" id="PTHR47953">
    <property type="entry name" value="OS08G0105600 PROTEIN"/>
    <property type="match status" value="1"/>
</dbReference>
<dbReference type="Pfam" id="PF00067">
    <property type="entry name" value="p450"/>
    <property type="match status" value="1"/>
</dbReference>
<dbReference type="PRINTS" id="PR00463">
    <property type="entry name" value="EP450I"/>
</dbReference>
<dbReference type="PRINTS" id="PR00385">
    <property type="entry name" value="P450"/>
</dbReference>
<dbReference type="SUPFAM" id="SSF48264">
    <property type="entry name" value="Cytochrome P450"/>
    <property type="match status" value="1"/>
</dbReference>
<dbReference type="PROSITE" id="PS00086">
    <property type="entry name" value="CYTOCHROME_P450"/>
    <property type="match status" value="1"/>
</dbReference>
<gene>
    <name evidence="5" type="primary">AS</name>
</gene>
<reference evidence="7" key="1">
    <citation type="journal article" date="2022" name="Chem. Sci.">
        <title>Deciphering and reprogramming the cyclization regioselectivity in bifurcation of indole alkaloid biosynthesis.</title>
        <authorList>
            <person name="Wang Z."/>
            <person name="Xiao Y."/>
            <person name="Wu S."/>
            <person name="Chen J."/>
            <person name="Li A."/>
            <person name="Tatsis E.C."/>
        </authorList>
    </citation>
    <scope>NUCLEOTIDE SEQUENCE [MRNA]</scope>
    <scope>FUNCTION</scope>
    <scope>CATALYTIC ACTIVITY</scope>
    <scope>PATHWAY</scope>
</reference>
<feature type="chain" id="PRO_0000462245" description="Alstonine synthase">
    <location>
        <begin position="1"/>
        <end position="514"/>
    </location>
</feature>
<feature type="transmembrane region" description="Helical" evidence="2">
    <location>
        <begin position="4"/>
        <end position="24"/>
    </location>
</feature>
<feature type="binding site" description="axial binding residue" evidence="1">
    <location>
        <position position="450"/>
    </location>
    <ligand>
        <name>heme</name>
        <dbReference type="ChEBI" id="CHEBI:30413"/>
    </ligand>
    <ligandPart>
        <name>Fe</name>
        <dbReference type="ChEBI" id="CHEBI:18248"/>
    </ligandPart>
</feature>
<feature type="glycosylation site" description="N-linked (GlcNAc...) asparagine" evidence="3">
    <location>
        <position position="428"/>
    </location>
</feature>
<proteinExistence type="evidence at protein level"/>
<sequence>MATPQFSCLLPAFFLLVVFLFLLIKELRRYKSPKTTQKLPPGPPMLPIIGNLHQMASSLPHQNLKKLADKYGPLMHLKLGEISAVAVSSPRLAKEVLQTRGLAFADRPQSVVAKLMLHNCLGVTFSRYGDYWRQLRQIFAMELLSSKSVQSFSTIMEDELFAMVKSIESEAGRPIILADKLISYLYATLSRATLGRVCKGKETLIEVTGETLALSGAQSLEDIFPSVKIFAYLNPLRPKVRKLFNRIDGVLEDIINQQEKKLLSARVDNDQLQPEENDMLSVLLKLRNGKDSKVQVTNNDIKAIIFELFLAGTVGSSTTVEWAMSEMMKNPKVMEKAQHEVREVLKGKKRICQSDIQKLSYLKLVVKETLRLHPPAPLLFPRECRGQCEVDGYTIPAKAMVMVNCWALGRDPEHWIEADKFEPERFKNSSIDFIGNHFEYIPFGAGRRICPGISFGATNVELLLAALLYHFDWELAGGMHPKDLDMLELFGPGCTRKNPLSVIPSICIPSHDDN</sequence>